<name>IDI_ECOUT</name>
<comment type="function">
    <text evidence="1">Catalyzes the 1,3-allylic rearrangement of the homoallylic substrate isopentenyl (IPP) to its highly electrophilic allylic isomer, dimethylallyl diphosphate (DMAPP).</text>
</comment>
<comment type="catalytic activity">
    <reaction evidence="1">
        <text>isopentenyl diphosphate = dimethylallyl diphosphate</text>
        <dbReference type="Rhea" id="RHEA:23284"/>
        <dbReference type="ChEBI" id="CHEBI:57623"/>
        <dbReference type="ChEBI" id="CHEBI:128769"/>
        <dbReference type="EC" id="5.3.3.2"/>
    </reaction>
</comment>
<comment type="cofactor">
    <cofactor evidence="1">
        <name>Mg(2+)</name>
        <dbReference type="ChEBI" id="CHEBI:18420"/>
    </cofactor>
    <text evidence="1">Binds 1 Mg(2+) ion per subunit. The magnesium ion binds only when substrate is bound.</text>
</comment>
<comment type="cofactor">
    <cofactor evidence="1">
        <name>Mn(2+)</name>
        <dbReference type="ChEBI" id="CHEBI:29035"/>
    </cofactor>
    <text evidence="1">Binds 1 Mn(2+) ion per subunit.</text>
</comment>
<comment type="pathway">
    <text evidence="1">Isoprenoid biosynthesis; dimethylallyl diphosphate biosynthesis; dimethylallyl diphosphate from isopentenyl diphosphate: step 1/1.</text>
</comment>
<comment type="subunit">
    <text evidence="1">Homodimer.</text>
</comment>
<comment type="subcellular location">
    <subcellularLocation>
        <location evidence="1">Cytoplasm</location>
    </subcellularLocation>
</comment>
<comment type="similarity">
    <text evidence="1">Belongs to the IPP isomerase type 1 family.</text>
</comment>
<organism>
    <name type="scientific">Escherichia coli (strain UTI89 / UPEC)</name>
    <dbReference type="NCBI Taxonomy" id="364106"/>
    <lineage>
        <taxon>Bacteria</taxon>
        <taxon>Pseudomonadati</taxon>
        <taxon>Pseudomonadota</taxon>
        <taxon>Gammaproteobacteria</taxon>
        <taxon>Enterobacterales</taxon>
        <taxon>Enterobacteriaceae</taxon>
        <taxon>Escherichia</taxon>
    </lineage>
</organism>
<feature type="chain" id="PRO_1000012170" description="Isopentenyl-diphosphate Delta-isomerase">
    <location>
        <begin position="1"/>
        <end position="182"/>
    </location>
</feature>
<feature type="domain" description="Nudix hydrolase">
    <location>
        <begin position="30"/>
        <end position="164"/>
    </location>
</feature>
<feature type="active site" evidence="1">
    <location>
        <position position="67"/>
    </location>
</feature>
<feature type="active site" evidence="1">
    <location>
        <position position="116"/>
    </location>
</feature>
<feature type="binding site" evidence="1">
    <location>
        <position position="25"/>
    </location>
    <ligand>
        <name>Mn(2+)</name>
        <dbReference type="ChEBI" id="CHEBI:29035"/>
    </ligand>
</feature>
<feature type="binding site" evidence="1">
    <location>
        <position position="32"/>
    </location>
    <ligand>
        <name>Mn(2+)</name>
        <dbReference type="ChEBI" id="CHEBI:29035"/>
    </ligand>
</feature>
<feature type="binding site" evidence="1">
    <location>
        <position position="69"/>
    </location>
    <ligand>
        <name>Mn(2+)</name>
        <dbReference type="ChEBI" id="CHEBI:29035"/>
    </ligand>
</feature>
<feature type="binding site" evidence="1">
    <location>
        <position position="87"/>
    </location>
    <ligand>
        <name>Mg(2+)</name>
        <dbReference type="ChEBI" id="CHEBI:18420"/>
    </ligand>
</feature>
<feature type="binding site" evidence="1">
    <location>
        <position position="114"/>
    </location>
    <ligand>
        <name>Mn(2+)</name>
        <dbReference type="ChEBI" id="CHEBI:29035"/>
    </ligand>
</feature>
<feature type="binding site" evidence="1">
    <location>
        <position position="116"/>
    </location>
    <ligand>
        <name>Mn(2+)</name>
        <dbReference type="ChEBI" id="CHEBI:29035"/>
    </ligand>
</feature>
<reference key="1">
    <citation type="journal article" date="2006" name="Proc. Natl. Acad. Sci. U.S.A.">
        <title>Identification of genes subject to positive selection in uropathogenic strains of Escherichia coli: a comparative genomics approach.</title>
        <authorList>
            <person name="Chen S.L."/>
            <person name="Hung C.-S."/>
            <person name="Xu J."/>
            <person name="Reigstad C.S."/>
            <person name="Magrini V."/>
            <person name="Sabo A."/>
            <person name="Blasiar D."/>
            <person name="Bieri T."/>
            <person name="Meyer R.R."/>
            <person name="Ozersky P."/>
            <person name="Armstrong J.R."/>
            <person name="Fulton R.S."/>
            <person name="Latreille J.P."/>
            <person name="Spieth J."/>
            <person name="Hooton T.M."/>
            <person name="Mardis E.R."/>
            <person name="Hultgren S.J."/>
            <person name="Gordon J.I."/>
        </authorList>
    </citation>
    <scope>NUCLEOTIDE SEQUENCE [LARGE SCALE GENOMIC DNA]</scope>
    <source>
        <strain>UTI89 / UPEC</strain>
    </source>
</reference>
<keyword id="KW-0963">Cytoplasm</keyword>
<keyword id="KW-0413">Isomerase</keyword>
<keyword id="KW-0414">Isoprene biosynthesis</keyword>
<keyword id="KW-0460">Magnesium</keyword>
<keyword id="KW-0464">Manganese</keyword>
<keyword id="KW-0479">Metal-binding</keyword>
<proteinExistence type="inferred from homology"/>
<protein>
    <recommendedName>
        <fullName evidence="1">Isopentenyl-diphosphate Delta-isomerase</fullName>
        <shortName evidence="1">IPP isomerase</shortName>
        <ecNumber evidence="1">5.3.3.2</ecNumber>
    </recommendedName>
    <alternativeName>
        <fullName evidence="1">IPP:DMAPP isomerase</fullName>
    </alternativeName>
    <alternativeName>
        <fullName evidence="1">Isopentenyl pyrophosphate isomerase</fullName>
    </alternativeName>
</protein>
<evidence type="ECO:0000255" key="1">
    <source>
        <dbReference type="HAMAP-Rule" id="MF_00202"/>
    </source>
</evidence>
<dbReference type="EC" id="5.3.3.2" evidence="1"/>
<dbReference type="EMBL" id="CP000243">
    <property type="protein sequence ID" value="ABE08722.1"/>
    <property type="molecule type" value="Genomic_DNA"/>
</dbReference>
<dbReference type="RefSeq" id="WP_001192798.1">
    <property type="nucleotide sequence ID" value="NZ_CP064825.1"/>
</dbReference>
<dbReference type="SMR" id="Q1R7E2"/>
<dbReference type="KEGG" id="eci:UTI89_C3274"/>
<dbReference type="HOGENOM" id="CLU_060552_2_0_6"/>
<dbReference type="UniPathway" id="UPA00059">
    <property type="reaction ID" value="UER00104"/>
</dbReference>
<dbReference type="Proteomes" id="UP000001952">
    <property type="component" value="Chromosome"/>
</dbReference>
<dbReference type="GO" id="GO:0005737">
    <property type="term" value="C:cytoplasm"/>
    <property type="evidence" value="ECO:0007669"/>
    <property type="project" value="UniProtKB-SubCell"/>
</dbReference>
<dbReference type="GO" id="GO:0004452">
    <property type="term" value="F:isopentenyl-diphosphate delta-isomerase activity"/>
    <property type="evidence" value="ECO:0007669"/>
    <property type="project" value="UniProtKB-UniRule"/>
</dbReference>
<dbReference type="GO" id="GO:0046872">
    <property type="term" value="F:metal ion binding"/>
    <property type="evidence" value="ECO:0007669"/>
    <property type="project" value="UniProtKB-KW"/>
</dbReference>
<dbReference type="GO" id="GO:0050992">
    <property type="term" value="P:dimethylallyl diphosphate biosynthetic process"/>
    <property type="evidence" value="ECO:0007669"/>
    <property type="project" value="UniProtKB-UniRule"/>
</dbReference>
<dbReference type="GO" id="GO:0008299">
    <property type="term" value="P:isoprenoid biosynthetic process"/>
    <property type="evidence" value="ECO:0007669"/>
    <property type="project" value="UniProtKB-KW"/>
</dbReference>
<dbReference type="CDD" id="cd02885">
    <property type="entry name" value="NUDIX_IPP_Isomerase"/>
    <property type="match status" value="1"/>
</dbReference>
<dbReference type="FunFam" id="3.90.79.10:FF:000009">
    <property type="entry name" value="Isopentenyl-diphosphate Delta-isomerase"/>
    <property type="match status" value="1"/>
</dbReference>
<dbReference type="Gene3D" id="3.90.79.10">
    <property type="entry name" value="Nucleoside Triphosphate Pyrophosphohydrolase"/>
    <property type="match status" value="1"/>
</dbReference>
<dbReference type="HAMAP" id="MF_00202">
    <property type="entry name" value="Idi"/>
    <property type="match status" value="1"/>
</dbReference>
<dbReference type="InterPro" id="IPR056375">
    <property type="entry name" value="Idi_bact"/>
</dbReference>
<dbReference type="InterPro" id="IPR011876">
    <property type="entry name" value="IsopentenylPP_isomerase_typ1"/>
</dbReference>
<dbReference type="InterPro" id="IPR015797">
    <property type="entry name" value="NUDIX_hydrolase-like_dom_sf"/>
</dbReference>
<dbReference type="InterPro" id="IPR000086">
    <property type="entry name" value="NUDIX_hydrolase_dom"/>
</dbReference>
<dbReference type="NCBIfam" id="TIGR02150">
    <property type="entry name" value="IPP_isom_1"/>
    <property type="match status" value="1"/>
</dbReference>
<dbReference type="NCBIfam" id="NF002995">
    <property type="entry name" value="PRK03759.1"/>
    <property type="match status" value="1"/>
</dbReference>
<dbReference type="PANTHER" id="PTHR10885">
    <property type="entry name" value="ISOPENTENYL-DIPHOSPHATE DELTA-ISOMERASE"/>
    <property type="match status" value="1"/>
</dbReference>
<dbReference type="PANTHER" id="PTHR10885:SF0">
    <property type="entry name" value="ISOPENTENYL-DIPHOSPHATE DELTA-ISOMERASE"/>
    <property type="match status" value="1"/>
</dbReference>
<dbReference type="Pfam" id="PF00293">
    <property type="entry name" value="NUDIX"/>
    <property type="match status" value="1"/>
</dbReference>
<dbReference type="PIRSF" id="PIRSF018427">
    <property type="entry name" value="Isopntndiph_ism"/>
    <property type="match status" value="1"/>
</dbReference>
<dbReference type="SUPFAM" id="SSF55811">
    <property type="entry name" value="Nudix"/>
    <property type="match status" value="1"/>
</dbReference>
<dbReference type="PROSITE" id="PS51462">
    <property type="entry name" value="NUDIX"/>
    <property type="match status" value="1"/>
</dbReference>
<sequence>MQTEHVILLNAQGVPTGTLEKYAAHTADTLLHLAFSSWLFNAKGQLLVTRRALSKKAWPGVWTNSVCGHPQLGESNEEAVIRRCRYELGVEITPPESIYPDFRYRATDPNGIVENEVCPVFAARTTSALQINDDEVMDYQWCDLAAVLRGIDATPWAFSPWMVMQATNREARKRLSAFTQLK</sequence>
<gene>
    <name evidence="1" type="primary">idi</name>
    <name type="ordered locus">UTI89_C3274</name>
</gene>
<accession>Q1R7E2</accession>